<reference evidence="5" key="1">
    <citation type="journal article" date="2009" name="Antimicrob. Agents Chemother.">
        <title>Activity of the novel peptide arminin against multiresistant human pathogens shows the considerable potential of phylogenetically ancient organisms as drug sources.</title>
        <authorList>
            <person name="Augustin R."/>
            <person name="Anton-Erxleben F."/>
            <person name="Jungnickel S."/>
            <person name="Hemmrich G."/>
            <person name="Spudy B."/>
            <person name="Podschun R."/>
            <person name="Bosch T.C."/>
        </authorList>
    </citation>
    <scope>NUCLEOTIDE SEQUENCE [MRNA]</scope>
    <source>
        <strain>AEP</strain>
    </source>
</reference>
<accession>D2XUV0</accession>
<comment type="function">
    <text evidence="1">Antimicrobial peptide with a broad-spectrum antimicrobial activity. Keeps its antibacterial activity under a wide range of salt concentrations that mimic physiological conditions of human blood, which is surprising, since Hydra is an obligate freshwater animal with nearly no salt tolerance. Does not affect red blood cells.</text>
</comment>
<comment type="subcellular location">
    <subcellularLocation>
        <location evidence="1">Secreted</location>
    </subcellularLocation>
    <subcellularLocation>
        <location evidence="1">Target cell membrane</location>
    </subcellularLocation>
</comment>
<comment type="tissue specificity">
    <text evidence="1">Expressed in entodermal epithelium along the body column.</text>
</comment>
<comment type="similarity">
    <text evidence="4">Belongs to the arminin family.</text>
</comment>
<proteinExistence type="inferred from homology"/>
<keyword id="KW-0027">Amidation</keyword>
<keyword id="KW-0044">Antibiotic</keyword>
<keyword id="KW-0929">Antimicrobial</keyword>
<keyword id="KW-0391">Immunity</keyword>
<keyword id="KW-0399">Innate immunity</keyword>
<keyword id="KW-0472">Membrane</keyword>
<keyword id="KW-1185">Reference proteome</keyword>
<keyword id="KW-0964">Secreted</keyword>
<keyword id="KW-0732">Signal</keyword>
<keyword id="KW-1052">Target cell membrane</keyword>
<keyword id="KW-1053">Target membrane</keyword>
<evidence type="ECO:0000250" key="1">
    <source>
        <dbReference type="UniProtKB" id="D2XUU4"/>
    </source>
</evidence>
<evidence type="ECO:0000255" key="2"/>
<evidence type="ECO:0000303" key="3">
    <source>
    </source>
</evidence>
<evidence type="ECO:0000305" key="4"/>
<evidence type="ECO:0000312" key="5">
    <source>
        <dbReference type="EMBL" id="ADB56983.1"/>
    </source>
</evidence>
<sequence length="83" mass="9852">MKTVFAILFLTFIALTCARNYEDLKEKIKNEVEREIFEDLEEESDELENNFKKFNDAKPWTRWIRWKTIVPFIPAVIAAAGKK</sequence>
<protein>
    <recommendedName>
        <fullName evidence="3">Arminin 3a</fullName>
    </recommendedName>
</protein>
<organism>
    <name type="scientific">Hydra vulgaris</name>
    <name type="common">Hydra</name>
    <name type="synonym">Hydra attenuata</name>
    <dbReference type="NCBI Taxonomy" id="6087"/>
    <lineage>
        <taxon>Eukaryota</taxon>
        <taxon>Metazoa</taxon>
        <taxon>Cnidaria</taxon>
        <taxon>Hydrozoa</taxon>
        <taxon>Hydroidolina</taxon>
        <taxon>Anthoathecata</taxon>
        <taxon>Aplanulata</taxon>
        <taxon>Hydridae</taxon>
        <taxon>Hydra</taxon>
    </lineage>
</organism>
<dbReference type="EMBL" id="GU256280">
    <property type="protein sequence ID" value="ADB56983.1"/>
    <property type="molecule type" value="mRNA"/>
</dbReference>
<dbReference type="Proteomes" id="UP000694840">
    <property type="component" value="Unplaced"/>
</dbReference>
<dbReference type="GO" id="GO:0005576">
    <property type="term" value="C:extracellular region"/>
    <property type="evidence" value="ECO:0007669"/>
    <property type="project" value="UniProtKB-SubCell"/>
</dbReference>
<feature type="signal peptide" evidence="2">
    <location>
        <begin position="1"/>
        <end position="18"/>
    </location>
</feature>
<feature type="propeptide" id="PRO_0000461971" evidence="1">
    <location>
        <begin position="19"/>
        <end position="57"/>
    </location>
</feature>
<feature type="peptide" id="PRO_5003039714" description="Arminin 3a" evidence="1">
    <location>
        <begin position="58"/>
        <end position="80"/>
    </location>
</feature>
<feature type="modified residue" description="Alanine amide" evidence="1">
    <location>
        <position position="80"/>
    </location>
</feature>
<name>ARM3A_HYDVU</name>